<proteinExistence type="inferred from homology"/>
<name>ORN_HAEIG</name>
<sequence>MSFDKQNLIWIDLEMTGLDPEKERIIEIATIVTDKNLNILAEGPVLAVHQSDELLNKMNDWCQKTHSENGLIERVKASKLTERAAELQTLDFLKKWVPKGASPICGNSIAQDKRFLVKYMPDLADYFHYRHLDVSTLKELAARWKPEILEGFKKENTHLALDDIRESIKELAYYREHFMKLD</sequence>
<accession>A5UFF2</accession>
<organism>
    <name type="scientific">Haemophilus influenzae (strain PittGG)</name>
    <dbReference type="NCBI Taxonomy" id="374931"/>
    <lineage>
        <taxon>Bacteria</taxon>
        <taxon>Pseudomonadati</taxon>
        <taxon>Pseudomonadota</taxon>
        <taxon>Gammaproteobacteria</taxon>
        <taxon>Pasteurellales</taxon>
        <taxon>Pasteurellaceae</taxon>
        <taxon>Haemophilus</taxon>
    </lineage>
</organism>
<reference key="1">
    <citation type="journal article" date="2007" name="Genome Biol.">
        <title>Characterization and modeling of the Haemophilus influenzae core and supragenomes based on the complete genomic sequences of Rd and 12 clinical nontypeable strains.</title>
        <authorList>
            <person name="Hogg J.S."/>
            <person name="Hu F.Z."/>
            <person name="Janto B."/>
            <person name="Boissy R."/>
            <person name="Hayes J."/>
            <person name="Keefe R."/>
            <person name="Post J.C."/>
            <person name="Ehrlich G.D."/>
        </authorList>
    </citation>
    <scope>NUCLEOTIDE SEQUENCE [LARGE SCALE GENOMIC DNA]</scope>
    <source>
        <strain>PittGG</strain>
    </source>
</reference>
<keyword id="KW-0963">Cytoplasm</keyword>
<keyword id="KW-0269">Exonuclease</keyword>
<keyword id="KW-0378">Hydrolase</keyword>
<keyword id="KW-0540">Nuclease</keyword>
<feature type="chain" id="PRO_1000004254" description="Oligoribonuclease">
    <location>
        <begin position="1"/>
        <end position="182"/>
    </location>
</feature>
<feature type="domain" description="Exonuclease" evidence="1">
    <location>
        <begin position="8"/>
        <end position="171"/>
    </location>
</feature>
<feature type="active site" evidence="1">
    <location>
        <position position="129"/>
    </location>
</feature>
<gene>
    <name evidence="1" type="primary">orn</name>
    <name type="ordered locus">CGSHiGG_02325</name>
</gene>
<evidence type="ECO:0000255" key="1">
    <source>
        <dbReference type="HAMAP-Rule" id="MF_00045"/>
    </source>
</evidence>
<comment type="function">
    <text evidence="1">3'-to-5' exoribonuclease specific for small oligoribonucleotides.</text>
</comment>
<comment type="subcellular location">
    <subcellularLocation>
        <location evidence="1">Cytoplasm</location>
    </subcellularLocation>
</comment>
<comment type="similarity">
    <text evidence="1">Belongs to the oligoribonuclease family.</text>
</comment>
<protein>
    <recommendedName>
        <fullName evidence="1">Oligoribonuclease</fullName>
        <ecNumber evidence="1">3.1.15.-</ecNumber>
    </recommendedName>
</protein>
<dbReference type="EC" id="3.1.15.-" evidence="1"/>
<dbReference type="EMBL" id="CP000672">
    <property type="protein sequence ID" value="ABQ99507.1"/>
    <property type="molecule type" value="Genomic_DNA"/>
</dbReference>
<dbReference type="SMR" id="A5UFF2"/>
<dbReference type="KEGG" id="hiq:CGSHiGG_02325"/>
<dbReference type="HOGENOM" id="CLU_064761_2_0_6"/>
<dbReference type="Proteomes" id="UP000001990">
    <property type="component" value="Chromosome"/>
</dbReference>
<dbReference type="GO" id="GO:0005737">
    <property type="term" value="C:cytoplasm"/>
    <property type="evidence" value="ECO:0007669"/>
    <property type="project" value="UniProtKB-SubCell"/>
</dbReference>
<dbReference type="GO" id="GO:0000175">
    <property type="term" value="F:3'-5'-RNA exonuclease activity"/>
    <property type="evidence" value="ECO:0007669"/>
    <property type="project" value="InterPro"/>
</dbReference>
<dbReference type="GO" id="GO:0003676">
    <property type="term" value="F:nucleic acid binding"/>
    <property type="evidence" value="ECO:0007669"/>
    <property type="project" value="InterPro"/>
</dbReference>
<dbReference type="GO" id="GO:0006259">
    <property type="term" value="P:DNA metabolic process"/>
    <property type="evidence" value="ECO:0007669"/>
    <property type="project" value="UniProtKB-ARBA"/>
</dbReference>
<dbReference type="CDD" id="cd06135">
    <property type="entry name" value="Orn"/>
    <property type="match status" value="1"/>
</dbReference>
<dbReference type="FunFam" id="3.30.420.10:FF:000003">
    <property type="entry name" value="Oligoribonuclease"/>
    <property type="match status" value="1"/>
</dbReference>
<dbReference type="Gene3D" id="3.30.420.10">
    <property type="entry name" value="Ribonuclease H-like superfamily/Ribonuclease H"/>
    <property type="match status" value="1"/>
</dbReference>
<dbReference type="HAMAP" id="MF_00045">
    <property type="entry name" value="Oligoribonuclease"/>
    <property type="match status" value="1"/>
</dbReference>
<dbReference type="InterPro" id="IPR013520">
    <property type="entry name" value="Exonuclease_RNaseT/DNA_pol3"/>
</dbReference>
<dbReference type="InterPro" id="IPR022894">
    <property type="entry name" value="Oligoribonuclease"/>
</dbReference>
<dbReference type="InterPro" id="IPR012337">
    <property type="entry name" value="RNaseH-like_sf"/>
</dbReference>
<dbReference type="InterPro" id="IPR036397">
    <property type="entry name" value="RNaseH_sf"/>
</dbReference>
<dbReference type="NCBIfam" id="NF003765">
    <property type="entry name" value="PRK05359.1"/>
    <property type="match status" value="1"/>
</dbReference>
<dbReference type="PANTHER" id="PTHR11046">
    <property type="entry name" value="OLIGORIBONUCLEASE, MITOCHONDRIAL"/>
    <property type="match status" value="1"/>
</dbReference>
<dbReference type="PANTHER" id="PTHR11046:SF0">
    <property type="entry name" value="OLIGORIBONUCLEASE, MITOCHONDRIAL"/>
    <property type="match status" value="1"/>
</dbReference>
<dbReference type="Pfam" id="PF00929">
    <property type="entry name" value="RNase_T"/>
    <property type="match status" value="1"/>
</dbReference>
<dbReference type="SMART" id="SM00479">
    <property type="entry name" value="EXOIII"/>
    <property type="match status" value="1"/>
</dbReference>
<dbReference type="SUPFAM" id="SSF53098">
    <property type="entry name" value="Ribonuclease H-like"/>
    <property type="match status" value="1"/>
</dbReference>